<keyword id="KW-0002">3D-structure</keyword>
<keyword id="KW-0235">DNA replication</keyword>
<keyword id="KW-0597">Phosphoprotein</keyword>
<keyword id="KW-1185">Reference proteome</keyword>
<organismHost>
    <name type="scientific">Cynomys gunnisoni</name>
    <name type="common">Gunnison's prairie dog</name>
    <name type="synonym">Spermophilus gunnisoni</name>
    <dbReference type="NCBI Taxonomy" id="45479"/>
</organismHost>
<organismHost>
    <name type="scientific">Cynomys leucurus</name>
    <name type="common">White-tailed prairie dog</name>
    <dbReference type="NCBI Taxonomy" id="99825"/>
</organismHost>
<organismHost>
    <name type="scientific">Cynomys ludovicianus</name>
    <name type="common">Black-tailed prairie dog</name>
    <dbReference type="NCBI Taxonomy" id="45480"/>
</organismHost>
<organismHost>
    <name type="scientific">Cynomys mexicanus</name>
    <name type="common">Mexican prairie dog</name>
    <dbReference type="NCBI Taxonomy" id="99826"/>
</organismHost>
<organismHost>
    <name type="scientific">Cynomys parvidens</name>
    <name type="common">Utah prairie dog</name>
    <dbReference type="NCBI Taxonomy" id="99827"/>
</organismHost>
<organismHost>
    <name type="scientific">Gliridae</name>
    <name type="common">dormice</name>
    <dbReference type="NCBI Taxonomy" id="30650"/>
</organismHost>
<organismHost>
    <name type="scientific">Heliosciurus ruwenzorii</name>
    <name type="common">Ruwenzori sun squirrel</name>
    <dbReference type="NCBI Taxonomy" id="226685"/>
</organismHost>
<organismHost>
    <name type="scientific">Homo sapiens</name>
    <name type="common">Human</name>
    <dbReference type="NCBI Taxonomy" id="9606"/>
</organismHost>
<organismHost>
    <name type="scientific">Mus musculus</name>
    <name type="common">Mouse</name>
    <dbReference type="NCBI Taxonomy" id="10090"/>
</organismHost>
<evidence type="ECO:0000250" key="1">
    <source>
        <dbReference type="UniProtKB" id="P68710"/>
    </source>
</evidence>
<evidence type="ECO:0000305" key="2"/>
<evidence type="ECO:0007829" key="3">
    <source>
        <dbReference type="PDB" id="8HOY"/>
    </source>
</evidence>
<evidence type="ECO:0007829" key="4">
    <source>
        <dbReference type="PDB" id="8HPA"/>
    </source>
</evidence>
<evidence type="ECO:0007829" key="5">
    <source>
        <dbReference type="PDB" id="8WPE"/>
    </source>
</evidence>
<reference key="1">
    <citation type="journal article" date="2022" name="J. Infect. Dis.">
        <title>Exportation of Monkeypox virus from the African continent.</title>
        <authorList>
            <person name="Mauldin M.R."/>
            <person name="McCollum A.M."/>
            <person name="Nakazawa Y.J."/>
            <person name="Mandra A."/>
            <person name="Whitehouse E.R."/>
            <person name="Davidson W."/>
            <person name="Zhao H."/>
            <person name="Gao J."/>
            <person name="Li Y."/>
            <person name="Doty J."/>
            <person name="Yinka-Ogunleye A."/>
            <person name="Akinpelu A."/>
            <person name="Aruna O."/>
            <person name="Naidoo D."/>
            <person name="Lewandowski K."/>
            <person name="Afrough B."/>
            <person name="Graham V."/>
            <person name="Aarons E."/>
            <person name="Hewson R."/>
            <person name="Vipond R."/>
            <person name="Dunning J."/>
            <person name="Chand M."/>
            <person name="Brown C."/>
            <person name="Cohen-Gihon I."/>
            <person name="Erez N."/>
            <person name="Shifman O."/>
            <person name="Israeli O."/>
            <person name="Sharon M."/>
            <person name="Schwartz E."/>
            <person name="Beth-Din A."/>
            <person name="Zvi A."/>
            <person name="Mak T.M."/>
            <person name="Ng Y.K."/>
            <person name="Cui L."/>
            <person name="Lin R.T.P."/>
            <person name="Olson V.A."/>
            <person name="Brooks T."/>
            <person name="Paran N."/>
            <person name="Ihekweazu C."/>
            <person name="Reynolds M.G."/>
        </authorList>
    </citation>
    <scope>NUCLEOTIDE SEQUENCE [LARGE SCALE GENOMIC DNA]</scope>
    <source>
        <strain>MPXV-M5312_HM12_Rivers</strain>
    </source>
</reference>
<gene>
    <name type="primary">OPG148</name>
    <name type="ORF">MPXVgp132</name>
</gene>
<comment type="function">
    <text evidence="1">Plays an essential role in viral DNA replication by acting as the polymerase processivity factor together with protein OPG116. Serves as a bridge which links the DNA polymerase OPG071 and the uracil DNA glycosylase.</text>
</comment>
<comment type="subunit">
    <text evidence="1">Interacts with the DNA polymerase catalytic subunit OPG071. Interacts with UDG/OPG116. Component of the uracil-DNA glycosylase(UDG)-OPG148-polymerase complex; OPG148 and UDG form a heterodimeric processivity factor that associates with OPG071 to form the processive polymerase holoenzyme. Interacts with OPG117.</text>
</comment>
<comment type="similarity">
    <text evidence="2">Belongs to the orthopoxvirus OPG148 family.</text>
</comment>
<dbReference type="EMBL" id="MT903340">
    <property type="protein sequence ID" value="QNP13003.1"/>
    <property type="molecule type" value="Genomic_DNA"/>
</dbReference>
<dbReference type="RefSeq" id="YP_010377130.1">
    <property type="nucleotide sequence ID" value="NC_063383.1"/>
</dbReference>
<dbReference type="PDB" id="8HDZ">
    <property type="method" value="EM"/>
    <property type="resolution" value="3.05 A"/>
    <property type="chains" value="C=1-426"/>
</dbReference>
<dbReference type="PDB" id="8HG1">
    <property type="method" value="EM"/>
    <property type="resolution" value="2.80 A"/>
    <property type="chains" value="C=1-426"/>
</dbReference>
<dbReference type="PDB" id="8HLZ">
    <property type="method" value="EM"/>
    <property type="resolution" value="3.50 A"/>
    <property type="chains" value="C/F=1-426"/>
</dbReference>
<dbReference type="PDB" id="8HM0">
    <property type="method" value="EM"/>
    <property type="resolution" value="3.10 A"/>
    <property type="chains" value="C=1-426"/>
</dbReference>
<dbReference type="PDB" id="8HOY">
    <property type="method" value="EM"/>
    <property type="resolution" value="2.76 A"/>
    <property type="chains" value="C=1-426"/>
</dbReference>
<dbReference type="PDB" id="8HPA">
    <property type="method" value="EM"/>
    <property type="resolution" value="3.01 A"/>
    <property type="chains" value="C=1-426"/>
</dbReference>
<dbReference type="PDB" id="8J86">
    <property type="method" value="EM"/>
    <property type="resolution" value="3.22 A"/>
    <property type="chains" value="C=1-426"/>
</dbReference>
<dbReference type="PDB" id="8K8S">
    <property type="method" value="EM"/>
    <property type="resolution" value="3.06 A"/>
    <property type="chains" value="C=1-426"/>
</dbReference>
<dbReference type="PDB" id="8K8U">
    <property type="method" value="EM"/>
    <property type="resolution" value="3.05 A"/>
    <property type="chains" value="C=1-426"/>
</dbReference>
<dbReference type="PDB" id="8WPE">
    <property type="method" value="EM"/>
    <property type="resolution" value="2.70 A"/>
    <property type="chains" value="B=1-426"/>
</dbReference>
<dbReference type="PDB" id="8WPF">
    <property type="method" value="EM"/>
    <property type="resolution" value="3.00 A"/>
    <property type="chains" value="B=1-426"/>
</dbReference>
<dbReference type="PDB" id="8WPK">
    <property type="method" value="EM"/>
    <property type="resolution" value="2.70 A"/>
    <property type="chains" value="B=1-426"/>
</dbReference>
<dbReference type="PDB" id="8WPP">
    <property type="method" value="EM"/>
    <property type="resolution" value="3.10 A"/>
    <property type="chains" value="B=1-426"/>
</dbReference>
<dbReference type="PDBsum" id="8HDZ"/>
<dbReference type="PDBsum" id="8HG1"/>
<dbReference type="PDBsum" id="8HLZ"/>
<dbReference type="PDBsum" id="8HM0"/>
<dbReference type="PDBsum" id="8HOY"/>
<dbReference type="PDBsum" id="8HPA"/>
<dbReference type="PDBsum" id="8J86"/>
<dbReference type="PDBsum" id="8K8S"/>
<dbReference type="PDBsum" id="8K8U"/>
<dbReference type="PDBsum" id="8WPE"/>
<dbReference type="PDBsum" id="8WPF"/>
<dbReference type="PDBsum" id="8WPK"/>
<dbReference type="PDBsum" id="8WPP"/>
<dbReference type="EMDB" id="EMD-37714"/>
<dbReference type="EMDB" id="EMD-37715"/>
<dbReference type="EMDB" id="EMD-37717"/>
<dbReference type="EMDB" id="EMD-37722"/>
<dbReference type="SMR" id="A0A7H0DNC0"/>
<dbReference type="GeneID" id="72551543"/>
<dbReference type="Proteomes" id="UP000516359">
    <property type="component" value="Genome"/>
</dbReference>
<dbReference type="GO" id="GO:0006260">
    <property type="term" value="P:DNA replication"/>
    <property type="evidence" value="ECO:0007669"/>
    <property type="project" value="UniProtKB-KW"/>
</dbReference>
<dbReference type="Gene3D" id="6.10.140.1880">
    <property type="match status" value="1"/>
</dbReference>
<dbReference type="InterPro" id="IPR010267">
    <property type="entry name" value="Chordopox_A20R"/>
</dbReference>
<dbReference type="Pfam" id="PF05941">
    <property type="entry name" value="Chordopox_A20R"/>
    <property type="match status" value="1"/>
</dbReference>
<proteinExistence type="evidence at protein level"/>
<protein>
    <recommendedName>
        <fullName>DNA polymerase processivity factor component OPG148</fullName>
    </recommendedName>
</protein>
<organism>
    <name type="scientific">Monkeypox virus</name>
    <dbReference type="NCBI Taxonomy" id="10244"/>
    <lineage>
        <taxon>Viruses</taxon>
        <taxon>Varidnaviria</taxon>
        <taxon>Bamfordvirae</taxon>
        <taxon>Nucleocytoviricota</taxon>
        <taxon>Pokkesviricetes</taxon>
        <taxon>Chitovirales</taxon>
        <taxon>Poxviridae</taxon>
        <taxon>Chordopoxvirinae</taxon>
        <taxon>Orthopoxvirus</taxon>
    </lineage>
</organism>
<feature type="chain" id="PRO_0000457537" description="DNA polymerase processivity factor component OPG148">
    <location>
        <begin position="1"/>
        <end position="426"/>
    </location>
</feature>
<feature type="helix" evidence="5">
    <location>
        <begin position="4"/>
        <end position="18"/>
    </location>
</feature>
<feature type="turn" evidence="5">
    <location>
        <begin position="19"/>
        <end position="22"/>
    </location>
</feature>
<feature type="helix" evidence="5">
    <location>
        <begin position="25"/>
        <end position="42"/>
    </location>
</feature>
<feature type="helix" evidence="3">
    <location>
        <begin position="57"/>
        <end position="60"/>
    </location>
</feature>
<feature type="strand" evidence="5">
    <location>
        <begin position="69"/>
        <end position="71"/>
    </location>
</feature>
<feature type="strand" evidence="5">
    <location>
        <begin position="73"/>
        <end position="89"/>
    </location>
</feature>
<feature type="strand" evidence="3">
    <location>
        <begin position="90"/>
        <end position="92"/>
    </location>
</feature>
<feature type="strand" evidence="5">
    <location>
        <begin position="94"/>
        <end position="97"/>
    </location>
</feature>
<feature type="turn" evidence="5">
    <location>
        <begin position="98"/>
        <end position="100"/>
    </location>
</feature>
<feature type="helix" evidence="5">
    <location>
        <begin position="108"/>
        <end position="120"/>
    </location>
</feature>
<feature type="strand" evidence="5">
    <location>
        <begin position="124"/>
        <end position="132"/>
    </location>
</feature>
<feature type="strand" evidence="5">
    <location>
        <begin position="135"/>
        <end position="146"/>
    </location>
</feature>
<feature type="helix" evidence="5">
    <location>
        <begin position="148"/>
        <end position="158"/>
    </location>
</feature>
<feature type="strand" evidence="4">
    <location>
        <begin position="159"/>
        <end position="161"/>
    </location>
</feature>
<feature type="strand" evidence="5">
    <location>
        <begin position="166"/>
        <end position="170"/>
    </location>
</feature>
<feature type="strand" evidence="5">
    <location>
        <begin position="174"/>
        <end position="176"/>
    </location>
</feature>
<feature type="helix" evidence="5">
    <location>
        <begin position="178"/>
        <end position="188"/>
    </location>
</feature>
<feature type="strand" evidence="5">
    <location>
        <begin position="194"/>
        <end position="203"/>
    </location>
</feature>
<feature type="strand" evidence="5">
    <location>
        <begin position="206"/>
        <end position="210"/>
    </location>
</feature>
<feature type="strand" evidence="5">
    <location>
        <begin position="214"/>
        <end position="227"/>
    </location>
</feature>
<feature type="strand" evidence="5">
    <location>
        <begin position="229"/>
        <end position="239"/>
    </location>
</feature>
<feature type="turn" evidence="3">
    <location>
        <begin position="240"/>
        <end position="242"/>
    </location>
</feature>
<feature type="strand" evidence="5">
    <location>
        <begin position="244"/>
        <end position="246"/>
    </location>
</feature>
<feature type="helix" evidence="5">
    <location>
        <begin position="250"/>
        <end position="256"/>
    </location>
</feature>
<feature type="strand" evidence="5">
    <location>
        <begin position="262"/>
        <end position="268"/>
    </location>
</feature>
<feature type="strand" evidence="4">
    <location>
        <begin position="269"/>
        <end position="271"/>
    </location>
</feature>
<feature type="strand" evidence="5">
    <location>
        <begin position="273"/>
        <end position="275"/>
    </location>
</feature>
<feature type="strand" evidence="4">
    <location>
        <begin position="277"/>
        <end position="280"/>
    </location>
</feature>
<feature type="helix" evidence="5">
    <location>
        <begin position="286"/>
        <end position="297"/>
    </location>
</feature>
<feature type="strand" evidence="5">
    <location>
        <begin position="302"/>
        <end position="304"/>
    </location>
</feature>
<feature type="strand" evidence="5">
    <location>
        <begin position="307"/>
        <end position="309"/>
    </location>
</feature>
<feature type="helix" evidence="5">
    <location>
        <begin position="316"/>
        <end position="323"/>
    </location>
</feature>
<feature type="helix" evidence="5">
    <location>
        <begin position="331"/>
        <end position="340"/>
    </location>
</feature>
<feature type="helix" evidence="5">
    <location>
        <begin position="342"/>
        <end position="350"/>
    </location>
</feature>
<feature type="helix" evidence="5">
    <location>
        <begin position="353"/>
        <end position="360"/>
    </location>
</feature>
<feature type="helix" evidence="5">
    <location>
        <begin position="366"/>
        <end position="372"/>
    </location>
</feature>
<feature type="strand" evidence="5">
    <location>
        <begin position="375"/>
        <end position="390"/>
    </location>
</feature>
<feature type="helix" evidence="5">
    <location>
        <begin position="394"/>
        <end position="396"/>
    </location>
</feature>
<feature type="helix" evidence="5">
    <location>
        <begin position="398"/>
        <end position="405"/>
    </location>
</feature>
<feature type="helix" evidence="5">
    <location>
        <begin position="407"/>
        <end position="425"/>
    </location>
</feature>
<sequence>MTSSADLTNLKELLSLYKSLRFSDSVAIEKYNSLVEWGTSTYWKIGVQKVTNVETSISDYYDEVKNKPFNIDPGYYIFLPVYFGSVFIYSKGKNMVELGSGNSFQIPDEIRSACNKVLDSDNGIDFLRFVLLNNRWIMEDAISKYQSPVNIFKLASEYGLNIPNYLEIEIEEDTLFDDELYSIMERSFDDTFPKISISYIKLGELKRQVVDFFKFSFMYIESIKVDRIGDNIFIPSVITKSGKKILVKDVDHLIRSKVREHTFVKVKKKNTFSILYDYDGNGTETRGEVIKRIIDTIGRDYYVNGKYFSKVGIAGLKQLTNKLDINECATVDELVDEINKSGTVKRKIKNQSVFDLSRECLGYPEADFITLVNNMRFKIENCKVVNFNIENTNCLNNPSIETIYGNFNQFVSIFNTVTDVKKRLFE</sequence>
<name>PG148_MONPV</name>
<accession>A0A7H0DNC0</accession>